<keyword id="KW-0997">Cell inner membrane</keyword>
<keyword id="KW-1003">Cell membrane</keyword>
<keyword id="KW-0472">Membrane</keyword>
<keyword id="KW-0808">Transferase</keyword>
<keyword id="KW-0812">Transmembrane</keyword>
<keyword id="KW-1133">Transmembrane helix</keyword>
<reference key="1">
    <citation type="journal article" date="2004" name="Nat. Biotechnol.">
        <title>Complete genome sequence of the metabolically versatile photosynthetic bacterium Rhodopseudomonas palustris.</title>
        <authorList>
            <person name="Larimer F.W."/>
            <person name="Chain P."/>
            <person name="Hauser L."/>
            <person name="Lamerdin J.E."/>
            <person name="Malfatti S."/>
            <person name="Do L."/>
            <person name="Land M.L."/>
            <person name="Pelletier D.A."/>
            <person name="Beatty J.T."/>
            <person name="Lang A.S."/>
            <person name="Tabita F.R."/>
            <person name="Gibson J.L."/>
            <person name="Hanson T.E."/>
            <person name="Bobst C."/>
            <person name="Torres y Torres J.L."/>
            <person name="Peres C."/>
            <person name="Harrison F.H."/>
            <person name="Gibson J."/>
            <person name="Harwood C.S."/>
        </authorList>
    </citation>
    <scope>NUCLEOTIDE SEQUENCE [LARGE SCALE GENOMIC DNA]</scope>
    <source>
        <strain>ATCC BAA-98 / CGA009</strain>
    </source>
</reference>
<name>LGT_RHOPA</name>
<sequence length="286" mass="31226">MPFFAVAFPVFDPVAVAIGPFAIRWYALAYIAGIVIGWLYARMLLQRQRLWGGPSPISLEAFDDFILWVTIGIILGGRTGYVLFYNLDFFIRHPAEIFELWKGGMSFHGGFMGCVAAVVLFGWKRKVPILSLGDITCAVGPIGLFLGRIANFINGELWGRPADASVPWAMVFPNAGPLPRHPSQLYEAGLEGIGLFVILALMIRAGALKRPGLIIGAFLTFYGLARITGEFFREPDPQLGFLWGDMTMGMLLSIPMVIVGILVMITTWRRGRGAPAAATPSSEAAS</sequence>
<evidence type="ECO:0000255" key="1">
    <source>
        <dbReference type="HAMAP-Rule" id="MF_01147"/>
    </source>
</evidence>
<organism>
    <name type="scientific">Rhodopseudomonas palustris (strain ATCC BAA-98 / CGA009)</name>
    <dbReference type="NCBI Taxonomy" id="258594"/>
    <lineage>
        <taxon>Bacteria</taxon>
        <taxon>Pseudomonadati</taxon>
        <taxon>Pseudomonadota</taxon>
        <taxon>Alphaproteobacteria</taxon>
        <taxon>Hyphomicrobiales</taxon>
        <taxon>Nitrobacteraceae</taxon>
        <taxon>Rhodopseudomonas</taxon>
    </lineage>
</organism>
<protein>
    <recommendedName>
        <fullName evidence="1">Phosphatidylglycerol--prolipoprotein diacylglyceryl transferase</fullName>
        <ecNumber evidence="1">2.5.1.145</ecNumber>
    </recommendedName>
</protein>
<comment type="function">
    <text evidence="1">Catalyzes the transfer of the diacylglyceryl group from phosphatidylglycerol to the sulfhydryl group of the N-terminal cysteine of a prolipoprotein, the first step in the formation of mature lipoproteins.</text>
</comment>
<comment type="catalytic activity">
    <reaction evidence="1">
        <text>L-cysteinyl-[prolipoprotein] + a 1,2-diacyl-sn-glycero-3-phospho-(1'-sn-glycerol) = an S-1,2-diacyl-sn-glyceryl-L-cysteinyl-[prolipoprotein] + sn-glycerol 1-phosphate + H(+)</text>
        <dbReference type="Rhea" id="RHEA:56712"/>
        <dbReference type="Rhea" id="RHEA-COMP:14679"/>
        <dbReference type="Rhea" id="RHEA-COMP:14680"/>
        <dbReference type="ChEBI" id="CHEBI:15378"/>
        <dbReference type="ChEBI" id="CHEBI:29950"/>
        <dbReference type="ChEBI" id="CHEBI:57685"/>
        <dbReference type="ChEBI" id="CHEBI:64716"/>
        <dbReference type="ChEBI" id="CHEBI:140658"/>
        <dbReference type="EC" id="2.5.1.145"/>
    </reaction>
</comment>
<comment type="pathway">
    <text evidence="1">Protein modification; lipoprotein biosynthesis (diacylglyceryl transfer).</text>
</comment>
<comment type="subcellular location">
    <subcellularLocation>
        <location evidence="1">Cell inner membrane</location>
        <topology evidence="1">Multi-pass membrane protein</topology>
    </subcellularLocation>
</comment>
<comment type="similarity">
    <text evidence="1">Belongs to the Lgt family.</text>
</comment>
<gene>
    <name evidence="1" type="primary">lgt</name>
    <name type="ordered locus">RPA4358</name>
</gene>
<dbReference type="EC" id="2.5.1.145" evidence="1"/>
<dbReference type="EMBL" id="BX572607">
    <property type="protein sequence ID" value="CAE29799.1"/>
    <property type="molecule type" value="Genomic_DNA"/>
</dbReference>
<dbReference type="RefSeq" id="WP_011159892.1">
    <property type="nucleotide sequence ID" value="NZ_CP116810.1"/>
</dbReference>
<dbReference type="SMR" id="P60973"/>
<dbReference type="STRING" id="258594.RPA4358"/>
<dbReference type="GeneID" id="66895491"/>
<dbReference type="eggNOG" id="COG0682">
    <property type="taxonomic scope" value="Bacteria"/>
</dbReference>
<dbReference type="HOGENOM" id="CLU_013386_1_0_5"/>
<dbReference type="PhylomeDB" id="P60973"/>
<dbReference type="UniPathway" id="UPA00664"/>
<dbReference type="GO" id="GO:0005886">
    <property type="term" value="C:plasma membrane"/>
    <property type="evidence" value="ECO:0007669"/>
    <property type="project" value="UniProtKB-SubCell"/>
</dbReference>
<dbReference type="GO" id="GO:0008961">
    <property type="term" value="F:phosphatidylglycerol-prolipoprotein diacylglyceryl transferase activity"/>
    <property type="evidence" value="ECO:0007669"/>
    <property type="project" value="UniProtKB-UniRule"/>
</dbReference>
<dbReference type="GO" id="GO:0042158">
    <property type="term" value="P:lipoprotein biosynthetic process"/>
    <property type="evidence" value="ECO:0007669"/>
    <property type="project" value="UniProtKB-UniRule"/>
</dbReference>
<dbReference type="HAMAP" id="MF_01147">
    <property type="entry name" value="Lgt"/>
    <property type="match status" value="1"/>
</dbReference>
<dbReference type="InterPro" id="IPR001640">
    <property type="entry name" value="Lgt"/>
</dbReference>
<dbReference type="NCBIfam" id="TIGR00544">
    <property type="entry name" value="lgt"/>
    <property type="match status" value="1"/>
</dbReference>
<dbReference type="PANTHER" id="PTHR30589:SF0">
    <property type="entry name" value="PHOSPHATIDYLGLYCEROL--PROLIPOPROTEIN DIACYLGLYCERYL TRANSFERASE"/>
    <property type="match status" value="1"/>
</dbReference>
<dbReference type="PANTHER" id="PTHR30589">
    <property type="entry name" value="PROLIPOPROTEIN DIACYLGLYCERYL TRANSFERASE"/>
    <property type="match status" value="1"/>
</dbReference>
<dbReference type="Pfam" id="PF01790">
    <property type="entry name" value="LGT"/>
    <property type="match status" value="1"/>
</dbReference>
<dbReference type="PROSITE" id="PS01311">
    <property type="entry name" value="LGT"/>
    <property type="match status" value="1"/>
</dbReference>
<proteinExistence type="inferred from homology"/>
<accession>P60973</accession>
<feature type="chain" id="PRO_0000172661" description="Phosphatidylglycerol--prolipoprotein diacylglyceryl transferase">
    <location>
        <begin position="1"/>
        <end position="286"/>
    </location>
</feature>
<feature type="transmembrane region" description="Helical" evidence="1">
    <location>
        <begin position="25"/>
        <end position="45"/>
    </location>
</feature>
<feature type="transmembrane region" description="Helical" evidence="1">
    <location>
        <begin position="65"/>
        <end position="85"/>
    </location>
</feature>
<feature type="transmembrane region" description="Helical" evidence="1">
    <location>
        <begin position="103"/>
        <end position="123"/>
    </location>
</feature>
<feature type="transmembrane region" description="Helical" evidence="1">
    <location>
        <begin position="127"/>
        <end position="147"/>
    </location>
</feature>
<feature type="transmembrane region" description="Helical" evidence="1">
    <location>
        <begin position="188"/>
        <end position="208"/>
    </location>
</feature>
<feature type="transmembrane region" description="Helical" evidence="1">
    <location>
        <begin position="212"/>
        <end position="232"/>
    </location>
</feature>
<feature type="transmembrane region" description="Helical" evidence="1">
    <location>
        <begin position="248"/>
        <end position="268"/>
    </location>
</feature>
<feature type="binding site" evidence="1">
    <location>
        <position position="148"/>
    </location>
    <ligand>
        <name>a 1,2-diacyl-sn-glycero-3-phospho-(1'-sn-glycerol)</name>
        <dbReference type="ChEBI" id="CHEBI:64716"/>
    </ligand>
</feature>